<name>PRM7_YEAST</name>
<proteinExistence type="evidence at transcript level"/>
<dbReference type="EMBL" id="Z71781">
    <property type="protein sequence ID" value="CAA96450.1"/>
    <property type="status" value="ALT_FRAME"/>
    <property type="molecule type" value="Genomic_DNA"/>
</dbReference>
<dbReference type="EMBL" id="Z71781">
    <property type="protein sequence ID" value="CAA96451.1"/>
    <property type="status" value="ALT_FRAME"/>
    <property type="molecule type" value="Genomic_DNA"/>
</dbReference>
<dbReference type="EMBL" id="Z74087">
    <property type="protein sequence ID" value="CAA98597.1"/>
    <property type="status" value="ALT_FRAME"/>
    <property type="molecule type" value="Genomic_DNA"/>
</dbReference>
<dbReference type="EMBL" id="Z74087">
    <property type="protein sequence ID" value="CAA98598.1"/>
    <property type="status" value="ALT_FRAME"/>
    <property type="molecule type" value="Genomic_DNA"/>
</dbReference>
<dbReference type="EMBL" id="AY557637">
    <property type="protein sequence ID" value="AAS55963.1"/>
    <property type="molecule type" value="Genomic_DNA"/>
</dbReference>
<dbReference type="EMBL" id="BK006938">
    <property type="protein sequence ID" value="DAA11816.1"/>
    <property type="molecule type" value="Genomic_DNA"/>
</dbReference>
<dbReference type="PIR" id="S67571">
    <property type="entry name" value="S67571"/>
</dbReference>
<dbReference type="PIR" id="S67572">
    <property type="entry name" value="S67572"/>
</dbReference>
<dbReference type="RefSeq" id="NP_010245.2">
    <property type="nucleotide sequence ID" value="NM_001180098.1"/>
</dbReference>
<dbReference type="BioGRID" id="32019">
    <property type="interactions" value="118"/>
</dbReference>
<dbReference type="FunCoup" id="Q12459">
    <property type="interactions" value="68"/>
</dbReference>
<dbReference type="STRING" id="4932.YDL039C"/>
<dbReference type="GlyGen" id="Q12459">
    <property type="glycosylation" value="2 sites"/>
</dbReference>
<dbReference type="PaxDb" id="4932-YDL039C"/>
<dbReference type="EnsemblFungi" id="YDL039C_mRNA">
    <property type="protein sequence ID" value="YDL039C"/>
    <property type="gene ID" value="YDL039C"/>
</dbReference>
<dbReference type="GeneID" id="851522"/>
<dbReference type="KEGG" id="sce:YDL039C"/>
<dbReference type="AGR" id="SGD:S000002197"/>
<dbReference type="SGD" id="S000002197">
    <property type="gene designation" value="PRM7"/>
</dbReference>
<dbReference type="VEuPathDB" id="FungiDB:YDL039C"/>
<dbReference type="HOGENOM" id="CLU_443593_0_0_1"/>
<dbReference type="InParanoid" id="Q12459"/>
<dbReference type="OMA" id="ASTXSTS"/>
<dbReference type="OrthoDB" id="4069175at2759"/>
<dbReference type="BioCyc" id="YEAST:G3O-29462-MONOMER"/>
<dbReference type="BioGRID-ORCS" id="851522">
    <property type="hits" value="2 hits in 10 CRISPR screens"/>
</dbReference>
<dbReference type="PRO" id="PR:Q12459"/>
<dbReference type="Proteomes" id="UP000002311">
    <property type="component" value="Chromosome IV"/>
</dbReference>
<dbReference type="RNAct" id="Q12459">
    <property type="molecule type" value="protein"/>
</dbReference>
<dbReference type="GO" id="GO:0016020">
    <property type="term" value="C:membrane"/>
    <property type="evidence" value="ECO:0000255"/>
    <property type="project" value="SGD"/>
</dbReference>
<feature type="chain" id="PRO_0000262750" description="Pheromone-regulated protein PRM7">
    <location>
        <begin position="1"/>
        <end position="698"/>
    </location>
</feature>
<feature type="region of interest" description="Disordered" evidence="1">
    <location>
        <begin position="1"/>
        <end position="65"/>
    </location>
</feature>
<feature type="region of interest" description="Disordered" evidence="1">
    <location>
        <begin position="133"/>
        <end position="183"/>
    </location>
</feature>
<feature type="region of interest" description="Disordered" evidence="1">
    <location>
        <begin position="197"/>
        <end position="274"/>
    </location>
</feature>
<feature type="region of interest" description="Disordered" evidence="1">
    <location>
        <begin position="455"/>
        <end position="480"/>
    </location>
</feature>
<feature type="compositionally biased region" description="Low complexity" evidence="1">
    <location>
        <begin position="9"/>
        <end position="56"/>
    </location>
</feature>
<feature type="compositionally biased region" description="Low complexity" evidence="1">
    <location>
        <begin position="158"/>
        <end position="183"/>
    </location>
</feature>
<feature type="compositionally biased region" description="Low complexity" evidence="1">
    <location>
        <begin position="455"/>
        <end position="465"/>
    </location>
</feature>
<reference key="1">
    <citation type="journal article" date="1997" name="Yeast">
        <title>The sequence of a 36.7 kb segment on the left arm of chromosome IV from Saccharomyces cerevisiae reveals 20 non-overlapping open reading frames (ORFs) including SIT4, FAD1, NAM1, RNA11, SIR2, NAT1, PRP9, ACT2 and MPS1 and 11 new ORFs.</title>
        <authorList>
            <person name="Saren A.-M."/>
            <person name="Laamanen P."/>
            <person name="Lejarcegui J.B."/>
            <person name="Paulin L."/>
        </authorList>
    </citation>
    <scope>NUCLEOTIDE SEQUENCE [GENOMIC DNA]</scope>
    <source>
        <strain>ATCC 204508 / S288c</strain>
    </source>
</reference>
<reference key="2">
    <citation type="journal article" date="1997" name="Nature">
        <title>The nucleotide sequence of Saccharomyces cerevisiae chromosome IV.</title>
        <authorList>
            <person name="Jacq C."/>
            <person name="Alt-Moerbe J."/>
            <person name="Andre B."/>
            <person name="Arnold W."/>
            <person name="Bahr A."/>
            <person name="Ballesta J.P.G."/>
            <person name="Bargues M."/>
            <person name="Baron L."/>
            <person name="Becker A."/>
            <person name="Biteau N."/>
            <person name="Bloecker H."/>
            <person name="Blugeon C."/>
            <person name="Boskovic J."/>
            <person name="Brandt P."/>
            <person name="Brueckner M."/>
            <person name="Buitrago M.J."/>
            <person name="Coster F."/>
            <person name="Delaveau T."/>
            <person name="del Rey F."/>
            <person name="Dujon B."/>
            <person name="Eide L.G."/>
            <person name="Garcia-Cantalejo J.M."/>
            <person name="Goffeau A."/>
            <person name="Gomez-Peris A."/>
            <person name="Granotier C."/>
            <person name="Hanemann V."/>
            <person name="Hankeln T."/>
            <person name="Hoheisel J.D."/>
            <person name="Jaeger W."/>
            <person name="Jimenez A."/>
            <person name="Jonniaux J.-L."/>
            <person name="Kraemer C."/>
            <person name="Kuester H."/>
            <person name="Laamanen P."/>
            <person name="Legros Y."/>
            <person name="Louis E.J."/>
            <person name="Moeller-Rieker S."/>
            <person name="Monnet A."/>
            <person name="Moro M."/>
            <person name="Mueller-Auer S."/>
            <person name="Nussbaumer B."/>
            <person name="Paricio N."/>
            <person name="Paulin L."/>
            <person name="Perea J."/>
            <person name="Perez-Alonso M."/>
            <person name="Perez-Ortin J.E."/>
            <person name="Pohl T.M."/>
            <person name="Prydz H."/>
            <person name="Purnelle B."/>
            <person name="Rasmussen S.W."/>
            <person name="Remacha M.A."/>
            <person name="Revuelta J.L."/>
            <person name="Rieger M."/>
            <person name="Salom D."/>
            <person name="Saluz H.P."/>
            <person name="Saiz J.E."/>
            <person name="Saren A.-M."/>
            <person name="Schaefer M."/>
            <person name="Scharfe M."/>
            <person name="Schmidt E.R."/>
            <person name="Schneider C."/>
            <person name="Scholler P."/>
            <person name="Schwarz S."/>
            <person name="Soler-Mira A."/>
            <person name="Urrestarazu L.A."/>
            <person name="Verhasselt P."/>
            <person name="Vissers S."/>
            <person name="Voet M."/>
            <person name="Volckaert G."/>
            <person name="Wagner G."/>
            <person name="Wambutt R."/>
            <person name="Wedler E."/>
            <person name="Wedler H."/>
            <person name="Woelfl S."/>
            <person name="Harris D.E."/>
            <person name="Bowman S."/>
            <person name="Brown D."/>
            <person name="Churcher C.M."/>
            <person name="Connor R."/>
            <person name="Dedman K."/>
            <person name="Gentles S."/>
            <person name="Hamlin N."/>
            <person name="Hunt S."/>
            <person name="Jones L."/>
            <person name="McDonald S."/>
            <person name="Murphy L.D."/>
            <person name="Niblett D."/>
            <person name="Odell C."/>
            <person name="Oliver K."/>
            <person name="Rajandream M.A."/>
            <person name="Richards C."/>
            <person name="Shore L."/>
            <person name="Walsh S.V."/>
            <person name="Barrell B.G."/>
            <person name="Dietrich F.S."/>
            <person name="Mulligan J.T."/>
            <person name="Allen E."/>
            <person name="Araujo R."/>
            <person name="Aviles E."/>
            <person name="Berno A."/>
            <person name="Carpenter J."/>
            <person name="Chen E."/>
            <person name="Cherry J.M."/>
            <person name="Chung E."/>
            <person name="Duncan M."/>
            <person name="Hunicke-Smith S."/>
            <person name="Hyman R.W."/>
            <person name="Komp C."/>
            <person name="Lashkari D."/>
            <person name="Lew H."/>
            <person name="Lin D."/>
            <person name="Mosedale D."/>
            <person name="Nakahara K."/>
            <person name="Namath A."/>
            <person name="Oefner P."/>
            <person name="Oh C."/>
            <person name="Petel F.X."/>
            <person name="Roberts D."/>
            <person name="Schramm S."/>
            <person name="Schroeder M."/>
            <person name="Shogren T."/>
            <person name="Shroff N."/>
            <person name="Winant A."/>
            <person name="Yelton M.A."/>
            <person name="Botstein D."/>
            <person name="Davis R.W."/>
            <person name="Johnston M."/>
            <person name="Andrews S."/>
            <person name="Brinkman R."/>
            <person name="Cooper J."/>
            <person name="Ding H."/>
            <person name="Du Z."/>
            <person name="Favello A."/>
            <person name="Fulton L."/>
            <person name="Gattung S."/>
            <person name="Greco T."/>
            <person name="Hallsworth K."/>
            <person name="Hawkins J."/>
            <person name="Hillier L.W."/>
            <person name="Jier M."/>
            <person name="Johnson D."/>
            <person name="Johnston L."/>
            <person name="Kirsten J."/>
            <person name="Kucaba T."/>
            <person name="Langston Y."/>
            <person name="Latreille P."/>
            <person name="Le T."/>
            <person name="Mardis E."/>
            <person name="Menezes S."/>
            <person name="Miller N."/>
            <person name="Nhan M."/>
            <person name="Pauley A."/>
            <person name="Peluso D."/>
            <person name="Rifkin L."/>
            <person name="Riles L."/>
            <person name="Taich A."/>
            <person name="Trevaskis E."/>
            <person name="Vignati D."/>
            <person name="Wilcox L."/>
            <person name="Wohldman P."/>
            <person name="Vaudin M."/>
            <person name="Wilson R."/>
            <person name="Waterston R."/>
            <person name="Albermann K."/>
            <person name="Hani J."/>
            <person name="Heumann K."/>
            <person name="Kleine K."/>
            <person name="Mewes H.-W."/>
            <person name="Zollner A."/>
            <person name="Zaccaria P."/>
        </authorList>
    </citation>
    <scope>NUCLEOTIDE SEQUENCE [LARGE SCALE GENOMIC DNA]</scope>
    <source>
        <strain>ATCC 204508 / S288c</strain>
    </source>
</reference>
<reference key="3">
    <citation type="journal article" date="2014" name="G3 (Bethesda)">
        <title>The reference genome sequence of Saccharomyces cerevisiae: Then and now.</title>
        <authorList>
            <person name="Engel S.R."/>
            <person name="Dietrich F.S."/>
            <person name="Fisk D.G."/>
            <person name="Binkley G."/>
            <person name="Balakrishnan R."/>
            <person name="Costanzo M.C."/>
            <person name="Dwight S.S."/>
            <person name="Hitz B.C."/>
            <person name="Karra K."/>
            <person name="Nash R.S."/>
            <person name="Weng S."/>
            <person name="Wong E.D."/>
            <person name="Lloyd P."/>
            <person name="Skrzypek M.S."/>
            <person name="Miyasato S.R."/>
            <person name="Simison M."/>
            <person name="Cherry J.M."/>
        </authorList>
    </citation>
    <scope>GENOME REANNOTATION</scope>
    <scope>SEQUENCE REVISION</scope>
    <scope>IDENTIFICATION OF FRAMESHIFT</scope>
    <source>
        <strain>ATCC 204508 / S288c</strain>
    </source>
</reference>
<reference key="4">
    <citation type="journal article" date="2007" name="Genome Res.">
        <title>Approaching a complete repository of sequence-verified protein-encoding clones for Saccharomyces cerevisiae.</title>
        <authorList>
            <person name="Hu Y."/>
            <person name="Rolfs A."/>
            <person name="Bhullar B."/>
            <person name="Murthy T.V.S."/>
            <person name="Zhu C."/>
            <person name="Berger M.F."/>
            <person name="Camargo A.A."/>
            <person name="Kelley F."/>
            <person name="McCarron S."/>
            <person name="Jepson D."/>
            <person name="Richardson A."/>
            <person name="Raphael J."/>
            <person name="Moreira D."/>
            <person name="Taycher E."/>
            <person name="Zuo D."/>
            <person name="Mohr S."/>
            <person name="Kane M.F."/>
            <person name="Williamson J."/>
            <person name="Simpson A.J.G."/>
            <person name="Bulyk M.L."/>
            <person name="Harlow E."/>
            <person name="Marsischky G."/>
            <person name="Kolodner R.D."/>
            <person name="LaBaer J."/>
        </authorList>
    </citation>
    <scope>NUCLEOTIDE SEQUENCE [GENOMIC DNA] OF 584-698</scope>
    <source>
        <strain>ATCC 204508 / S288c</strain>
    </source>
</reference>
<reference key="5">
    <citation type="journal article" date="2000" name="J. Cell Biol.">
        <title>Prm1p, a pheromone-regulated multispanning membrane protein, facilitates plasma membrane fusion during yeast mating.</title>
        <authorList>
            <person name="Heiman M.G."/>
            <person name="Walter P."/>
        </authorList>
    </citation>
    <scope>NOMENCLATURE</scope>
    <scope>INDUCTION</scope>
</reference>
<reference key="6">
    <citation type="journal article" date="2003" name="J. Biol. Chem.">
        <title>Genome expression analysis in yeast reveals novel transcriptional regulation by inositol and choline and new regulatory functions for Opi1p, Ino2p, and Ino4p.</title>
        <authorList>
            <person name="Santiago T.C."/>
            <person name="Mamoun C.B."/>
        </authorList>
    </citation>
    <scope>INDUCTION</scope>
</reference>
<reference key="7">
    <citation type="journal article" date="2003" name="Mol. Cell. Biol.">
        <title>The transcription factor Rim101p governs ion tolerance and cell differentiation by direct repression of the regulatory genes NRG1 and SMP1 in Saccharomyces cerevisiae.</title>
        <authorList>
            <person name="Lamb T.M."/>
            <person name="Mitchell A.P."/>
        </authorList>
    </citation>
    <scope>INDUCTION</scope>
</reference>
<evidence type="ECO:0000256" key="1">
    <source>
        <dbReference type="SAM" id="MobiDB-lite"/>
    </source>
</evidence>
<evidence type="ECO:0000269" key="2">
    <source>
    </source>
</evidence>
<evidence type="ECO:0000269" key="3">
    <source>
    </source>
</evidence>
<evidence type="ECO:0000269" key="4">
    <source>
    </source>
</evidence>
<evidence type="ECO:0000305" key="5"/>
<keyword id="KW-1185">Reference proteome</keyword>
<gene>
    <name type="primary">PRM7</name>
    <name type="ordered locus">YDL039C</name>
    <name type="ORF">D2723</name>
    <name type="ORF">D2726</name>
    <name type="ORF">YDL038C</name>
</gene>
<accession>Q12459</accession>
<accession>D6VRV6</accession>
<accession>Q99175</accession>
<sequence length="698" mass="70123">MYRTRSSDEVTTSTDLTSSSDVATSVDPTTSVISSTSADPTTSADSTTSTVQTTSAGPSNNIGNSTLANSTTFAVSSTSIDPTSSSDVITSTVQTTSIEPTTSLVSSNDITTSTSLNISVVISTSTDSTSLIESTTTVGPHASSSVAGMYRTRSSDEVTTSTDPTSSSDVATSADPTSSSAVTTLVDPTTSVVISTSVDQTSSSDVATSVDPTTSVISSTSADPTTSADSTTSTVQTTSVDPTSSVVSSAPVDPASSVVSLTSSYPTSSSTVTISANSNGSATLAAQTTSIDPVSSIVSSSGATTIISSASIDPASSVVSSTSSEPTSFIVSSTSVYSTRPSGPTTSTDLATFSDTIILRVSTTSTSQDTQTVSSSLTDMVSSTGSADLSVSSIQRSQVDPSTFAVSNSPVYPTASTGSTSTGIPIASESLSLSRQQGISATSSSSIVTLTPVDSASSSRSSATSIIKPNMPVSSNDSKTQSSVSVVDAFQSTKSSYPSITSADPTTLASENGLVGSSSSAHPITLDRTYASAHASVTDIVSRVTDSTRHTTLVTSNINIQSEVGNPNYSGPKDTTITKQSAFMTSPASTSTISNVQSTASVMNHSIEDNISAAASLESVSGTSTKDYSSQSSAIHYTNSFTTTTTNAFITSKHSIAAVSTGAITSSASISLIMEGSANIEAVGKLVWLAAALPLAFI</sequence>
<comment type="induction">
    <text evidence="2 3 4">Induced by pheromone. Down-regulated by RIM101 and inositol.</text>
</comment>
<comment type="sequence caution" evidence="5">
    <conflict type="frameshift">
        <sequence resource="EMBL-CDS" id="CAA96450"/>
    </conflict>
</comment>
<comment type="sequence caution" evidence="5">
    <conflict type="frameshift">
        <sequence resource="EMBL-CDS" id="CAA96451"/>
    </conflict>
</comment>
<comment type="sequence caution" evidence="5">
    <conflict type="frameshift">
        <sequence resource="EMBL-CDS" id="CAA98597"/>
    </conflict>
</comment>
<comment type="sequence caution" evidence="5">
    <conflict type="frameshift">
        <sequence resource="EMBL-CDS" id="CAA98598"/>
    </conflict>
</comment>
<organism>
    <name type="scientific">Saccharomyces cerevisiae (strain ATCC 204508 / S288c)</name>
    <name type="common">Baker's yeast</name>
    <dbReference type="NCBI Taxonomy" id="559292"/>
    <lineage>
        <taxon>Eukaryota</taxon>
        <taxon>Fungi</taxon>
        <taxon>Dikarya</taxon>
        <taxon>Ascomycota</taxon>
        <taxon>Saccharomycotina</taxon>
        <taxon>Saccharomycetes</taxon>
        <taxon>Saccharomycetales</taxon>
        <taxon>Saccharomycetaceae</taxon>
        <taxon>Saccharomyces</taxon>
    </lineage>
</organism>
<protein>
    <recommendedName>
        <fullName>Pheromone-regulated protein PRM7</fullName>
    </recommendedName>
</protein>